<keyword id="KW-0328">Glycosyltransferase</keyword>
<keyword id="KW-0460">Magnesium</keyword>
<keyword id="KW-0665">Pyrimidine biosynthesis</keyword>
<keyword id="KW-1185">Reference proteome</keyword>
<keyword id="KW-0808">Transferase</keyword>
<evidence type="ECO:0000255" key="1">
    <source>
        <dbReference type="HAMAP-Rule" id="MF_01208"/>
    </source>
</evidence>
<comment type="function">
    <text evidence="1">Catalyzes the transfer of a ribosyl phosphate group from 5-phosphoribose 1-diphosphate to orotate, leading to the formation of orotidine monophosphate (OMP).</text>
</comment>
<comment type="catalytic activity">
    <reaction evidence="1">
        <text>orotidine 5'-phosphate + diphosphate = orotate + 5-phospho-alpha-D-ribose 1-diphosphate</text>
        <dbReference type="Rhea" id="RHEA:10380"/>
        <dbReference type="ChEBI" id="CHEBI:30839"/>
        <dbReference type="ChEBI" id="CHEBI:33019"/>
        <dbReference type="ChEBI" id="CHEBI:57538"/>
        <dbReference type="ChEBI" id="CHEBI:58017"/>
        <dbReference type="EC" id="2.4.2.10"/>
    </reaction>
</comment>
<comment type="cofactor">
    <cofactor evidence="1">
        <name>Mg(2+)</name>
        <dbReference type="ChEBI" id="CHEBI:18420"/>
    </cofactor>
</comment>
<comment type="pathway">
    <text evidence="1">Pyrimidine metabolism; UMP biosynthesis via de novo pathway; UMP from orotate: step 1/2.</text>
</comment>
<comment type="subunit">
    <text evidence="1">Homodimer.</text>
</comment>
<comment type="similarity">
    <text evidence="1">Belongs to the purine/pyrimidine phosphoribosyltransferase family. PyrE subfamily.</text>
</comment>
<reference key="1">
    <citation type="journal article" date="2006" name="J. Bacteriol.">
        <title>The genome sequence of Methanosphaera stadtmanae reveals why this human intestinal archaeon is restricted to methanol and H2 for methane formation and ATP synthesis.</title>
        <authorList>
            <person name="Fricke W.F."/>
            <person name="Seedorf H."/>
            <person name="Henne A."/>
            <person name="Kruer M."/>
            <person name="Liesegang H."/>
            <person name="Hedderich R."/>
            <person name="Gottschalk G."/>
            <person name="Thauer R.K."/>
        </authorList>
    </citation>
    <scope>NUCLEOTIDE SEQUENCE [LARGE SCALE GENOMIC DNA]</scope>
    <source>
        <strain>ATCC 43021 / DSM 3091 / JCM 11832 / MCB-3</strain>
    </source>
</reference>
<accession>Q2NFI3</accession>
<proteinExistence type="inferred from homology"/>
<protein>
    <recommendedName>
        <fullName evidence="1">Orotate phosphoribosyltransferase</fullName>
        <shortName evidence="1">OPRT</shortName>
        <shortName evidence="1">OPRTase</shortName>
        <ecNumber evidence="1">2.4.2.10</ecNumber>
    </recommendedName>
</protein>
<name>PYRE_METST</name>
<feature type="chain" id="PRO_1000066255" description="Orotate phosphoribosyltransferase">
    <location>
        <begin position="1"/>
        <end position="178"/>
    </location>
</feature>
<feature type="binding site" evidence="1">
    <location>
        <position position="92"/>
    </location>
    <ligand>
        <name>5-phospho-alpha-D-ribose 1-diphosphate</name>
        <dbReference type="ChEBI" id="CHEBI:58017"/>
        <note>ligand shared between dimeric partners</note>
    </ligand>
</feature>
<feature type="binding site" description="in other chain" evidence="1">
    <location>
        <position position="93"/>
    </location>
    <ligand>
        <name>5-phospho-alpha-D-ribose 1-diphosphate</name>
        <dbReference type="ChEBI" id="CHEBI:58017"/>
        <note>ligand shared between dimeric partners</note>
    </ligand>
</feature>
<feature type="binding site" evidence="1">
    <location>
        <position position="96"/>
    </location>
    <ligand>
        <name>5-phospho-alpha-D-ribose 1-diphosphate</name>
        <dbReference type="ChEBI" id="CHEBI:58017"/>
        <note>ligand shared between dimeric partners</note>
    </ligand>
</feature>
<feature type="binding site" description="in other chain" evidence="1">
    <location>
        <begin position="118"/>
        <end position="126"/>
    </location>
    <ligand>
        <name>5-phospho-alpha-D-ribose 1-diphosphate</name>
        <dbReference type="ChEBI" id="CHEBI:58017"/>
        <note>ligand shared between dimeric partners</note>
    </ligand>
</feature>
<feature type="binding site" evidence="1">
    <location>
        <position position="122"/>
    </location>
    <ligand>
        <name>orotate</name>
        <dbReference type="ChEBI" id="CHEBI:30839"/>
    </ligand>
</feature>
<feature type="binding site" evidence="1">
    <location>
        <position position="150"/>
    </location>
    <ligand>
        <name>orotate</name>
        <dbReference type="ChEBI" id="CHEBI:30839"/>
    </ligand>
</feature>
<sequence length="178" mass="19767">MTDYKNKLINLLKENNVIKFGKFTLSSGRESDYYVDMKKAITEPEILDCVAHLITNEIEHDNIDKIAGPALGAVPIATATSLISKKPMLMIRKAKKTYGTSKQIEGELLENDDVVIVEDVTTTGGSLLKAINVIEDNGGNIVKAFVIVDREEGAQETFKENNIEFTPLLTISEFKKYL</sequence>
<dbReference type="EC" id="2.4.2.10" evidence="1"/>
<dbReference type="EMBL" id="CP000102">
    <property type="protein sequence ID" value="ABC57420.1"/>
    <property type="molecule type" value="Genomic_DNA"/>
</dbReference>
<dbReference type="RefSeq" id="WP_011406619.1">
    <property type="nucleotide sequence ID" value="NC_007681.1"/>
</dbReference>
<dbReference type="SMR" id="Q2NFI3"/>
<dbReference type="STRING" id="339860.Msp_1036"/>
<dbReference type="GeneID" id="41325605"/>
<dbReference type="KEGG" id="mst:Msp_1036"/>
<dbReference type="eggNOG" id="arCOG00029">
    <property type="taxonomic scope" value="Archaea"/>
</dbReference>
<dbReference type="HOGENOM" id="CLU_074878_2_0_2"/>
<dbReference type="OrthoDB" id="9089at2157"/>
<dbReference type="UniPathway" id="UPA00070">
    <property type="reaction ID" value="UER00119"/>
</dbReference>
<dbReference type="Proteomes" id="UP000001931">
    <property type="component" value="Chromosome"/>
</dbReference>
<dbReference type="GO" id="GO:0000287">
    <property type="term" value="F:magnesium ion binding"/>
    <property type="evidence" value="ECO:0007669"/>
    <property type="project" value="UniProtKB-UniRule"/>
</dbReference>
<dbReference type="GO" id="GO:0004588">
    <property type="term" value="F:orotate phosphoribosyltransferase activity"/>
    <property type="evidence" value="ECO:0007669"/>
    <property type="project" value="UniProtKB-UniRule"/>
</dbReference>
<dbReference type="GO" id="GO:0044205">
    <property type="term" value="P:'de novo' UMP biosynthetic process"/>
    <property type="evidence" value="ECO:0007669"/>
    <property type="project" value="UniProtKB-UniRule"/>
</dbReference>
<dbReference type="GO" id="GO:0019856">
    <property type="term" value="P:pyrimidine nucleobase biosynthetic process"/>
    <property type="evidence" value="ECO:0007669"/>
    <property type="project" value="TreeGrafter"/>
</dbReference>
<dbReference type="CDD" id="cd06223">
    <property type="entry name" value="PRTases_typeI"/>
    <property type="match status" value="1"/>
</dbReference>
<dbReference type="Gene3D" id="3.40.50.2020">
    <property type="match status" value="1"/>
</dbReference>
<dbReference type="HAMAP" id="MF_01208">
    <property type="entry name" value="PyrE"/>
    <property type="match status" value="1"/>
</dbReference>
<dbReference type="InterPro" id="IPR023031">
    <property type="entry name" value="OPRT"/>
</dbReference>
<dbReference type="InterPro" id="IPR004467">
    <property type="entry name" value="Or_phspho_trans_dom"/>
</dbReference>
<dbReference type="InterPro" id="IPR000836">
    <property type="entry name" value="PRibTrfase_dom"/>
</dbReference>
<dbReference type="InterPro" id="IPR029057">
    <property type="entry name" value="PRTase-like"/>
</dbReference>
<dbReference type="NCBIfam" id="TIGR00336">
    <property type="entry name" value="pyrE"/>
    <property type="match status" value="1"/>
</dbReference>
<dbReference type="PANTHER" id="PTHR19278">
    <property type="entry name" value="OROTATE PHOSPHORIBOSYLTRANSFERASE"/>
    <property type="match status" value="1"/>
</dbReference>
<dbReference type="PANTHER" id="PTHR19278:SF9">
    <property type="entry name" value="URIDINE 5'-MONOPHOSPHATE SYNTHASE"/>
    <property type="match status" value="1"/>
</dbReference>
<dbReference type="Pfam" id="PF00156">
    <property type="entry name" value="Pribosyltran"/>
    <property type="match status" value="1"/>
</dbReference>
<dbReference type="SUPFAM" id="SSF53271">
    <property type="entry name" value="PRTase-like"/>
    <property type="match status" value="1"/>
</dbReference>
<organism>
    <name type="scientific">Methanosphaera stadtmanae (strain ATCC 43021 / DSM 3091 / JCM 11832 / MCB-3)</name>
    <dbReference type="NCBI Taxonomy" id="339860"/>
    <lineage>
        <taxon>Archaea</taxon>
        <taxon>Methanobacteriati</taxon>
        <taxon>Methanobacteriota</taxon>
        <taxon>Methanomada group</taxon>
        <taxon>Methanobacteria</taxon>
        <taxon>Methanobacteriales</taxon>
        <taxon>Methanobacteriaceae</taxon>
        <taxon>Methanosphaera</taxon>
    </lineage>
</organism>
<gene>
    <name evidence="1" type="primary">pyrE</name>
    <name type="ordered locus">Msp_1036</name>
</gene>